<evidence type="ECO:0000269" key="1">
    <source>
    </source>
</evidence>
<evidence type="ECO:0000269" key="2">
    <source>
    </source>
</evidence>
<evidence type="ECO:0000269" key="3">
    <source>
    </source>
</evidence>
<evidence type="ECO:0000305" key="4"/>
<evidence type="ECO:0000305" key="5">
    <source>
    </source>
</evidence>
<sequence length="124" mass="14557">MDEYSPKRHDIAQLKFLCETLYHDCLANLEESNHGWVNDPTSAINLQLNELIEHIATFALNYKIKYNEDNKLIEQIDEYLDDTFMLFSSYGINMQDLQKWRKSGNRLFRCFVNATKENPASLSC</sequence>
<dbReference type="EMBL" id="U00096">
    <property type="protein sequence ID" value="AAC73563.1"/>
    <property type="molecule type" value="Genomic_DNA"/>
</dbReference>
<dbReference type="EMBL" id="AP009048">
    <property type="protein sequence ID" value="BAE76240.1"/>
    <property type="molecule type" value="Genomic_DNA"/>
</dbReference>
<dbReference type="EMBL" id="X57977">
    <property type="status" value="NOT_ANNOTATED_CDS"/>
    <property type="molecule type" value="Genomic_DNA"/>
</dbReference>
<dbReference type="PIR" id="D64776">
    <property type="entry name" value="D64776"/>
</dbReference>
<dbReference type="RefSeq" id="NP_414994.1">
    <property type="nucleotide sequence ID" value="NC_000913.3"/>
</dbReference>
<dbReference type="RefSeq" id="WP_000344800.1">
    <property type="nucleotide sequence ID" value="NZ_STEB01000007.1"/>
</dbReference>
<dbReference type="SMR" id="P0AAR0"/>
<dbReference type="BioGRID" id="4259498">
    <property type="interactions" value="27"/>
</dbReference>
<dbReference type="DIP" id="DIP-48132N"/>
<dbReference type="FunCoup" id="P0AAR0">
    <property type="interactions" value="27"/>
</dbReference>
<dbReference type="STRING" id="511145.b0461"/>
<dbReference type="PaxDb" id="511145-b0461"/>
<dbReference type="EnsemblBacteria" id="AAC73563">
    <property type="protein sequence ID" value="AAC73563"/>
    <property type="gene ID" value="b0461"/>
</dbReference>
<dbReference type="GeneID" id="93776989"/>
<dbReference type="GeneID" id="945106"/>
<dbReference type="KEGG" id="ecj:JW0450"/>
<dbReference type="KEGG" id="eco:b0461"/>
<dbReference type="KEGG" id="ecoc:C3026_02260"/>
<dbReference type="PATRIC" id="fig|1411691.4.peg.1815"/>
<dbReference type="EchoBASE" id="EB2326"/>
<dbReference type="eggNOG" id="ENOG502ZC6G">
    <property type="taxonomic scope" value="Bacteria"/>
</dbReference>
<dbReference type="HOGENOM" id="CLU_164850_0_0_6"/>
<dbReference type="InParanoid" id="P0AAR0"/>
<dbReference type="OMA" id="CERVEKY"/>
<dbReference type="OrthoDB" id="6444254at2"/>
<dbReference type="PhylomeDB" id="P0AAR0"/>
<dbReference type="BioCyc" id="EcoCyc:EG12429-MONOMER"/>
<dbReference type="PRO" id="PR:P0AAR0"/>
<dbReference type="Proteomes" id="UP000000625">
    <property type="component" value="Chromosome"/>
</dbReference>
<dbReference type="GO" id="GO:0005737">
    <property type="term" value="C:cytoplasm"/>
    <property type="evidence" value="ECO:0007669"/>
    <property type="project" value="UniProtKB-SubCell"/>
</dbReference>
<dbReference type="GO" id="GO:0003677">
    <property type="term" value="F:DNA binding"/>
    <property type="evidence" value="ECO:0000314"/>
    <property type="project" value="EcoCyc"/>
</dbReference>
<dbReference type="GO" id="GO:0044010">
    <property type="term" value="P:single-species biofilm formation"/>
    <property type="evidence" value="ECO:0000270"/>
    <property type="project" value="EcoCyc"/>
</dbReference>
<dbReference type="InterPro" id="IPR019693">
    <property type="entry name" value="Biofilm_formation_reg_YbaJ"/>
</dbReference>
<dbReference type="NCBIfam" id="NF007948">
    <property type="entry name" value="PRK10667.1"/>
    <property type="match status" value="1"/>
</dbReference>
<dbReference type="Pfam" id="PF10757">
    <property type="entry name" value="YbaJ"/>
    <property type="match status" value="1"/>
</dbReference>
<name>TOMB_ECOLI</name>
<feature type="chain" id="PRO_0000168617" description="Hha toxicity modulator TomB">
    <location>
        <begin position="1"/>
        <end position="124"/>
    </location>
</feature>
<organism>
    <name type="scientific">Escherichia coli (strain K12)</name>
    <dbReference type="NCBI Taxonomy" id="83333"/>
    <lineage>
        <taxon>Bacteria</taxon>
        <taxon>Pseudomonadati</taxon>
        <taxon>Pseudomonadota</taxon>
        <taxon>Gammaproteobacteria</taxon>
        <taxon>Enterobacterales</taxon>
        <taxon>Enterobacteriaceae</taxon>
        <taxon>Escherichia</taxon>
    </lineage>
</organism>
<gene>
    <name type="primary">tomB</name>
    <name type="synonym">ybaJ</name>
    <name type="ordered locus">b0461</name>
    <name type="ordered locus">JW0450</name>
</gene>
<accession>P0AAR0</accession>
<accession>P37611</accession>
<accession>P75708</accession>
<accession>Q2MBW6</accession>
<keyword id="KW-0963">Cytoplasm</keyword>
<keyword id="KW-0238">DNA-binding</keyword>
<keyword id="KW-1185">Reference proteome</keyword>
<proteinExistence type="evidence at protein level"/>
<reference key="1">
    <citation type="journal article" date="1997" name="Science">
        <title>The complete genome sequence of Escherichia coli K-12.</title>
        <authorList>
            <person name="Blattner F.R."/>
            <person name="Plunkett G. III"/>
            <person name="Bloch C.A."/>
            <person name="Perna N.T."/>
            <person name="Burland V."/>
            <person name="Riley M."/>
            <person name="Collado-Vides J."/>
            <person name="Glasner J.D."/>
            <person name="Rode C.K."/>
            <person name="Mayhew G.F."/>
            <person name="Gregor J."/>
            <person name="Davis N.W."/>
            <person name="Kirkpatrick H.A."/>
            <person name="Goeden M.A."/>
            <person name="Rose D.J."/>
            <person name="Mau B."/>
            <person name="Shao Y."/>
        </authorList>
    </citation>
    <scope>NUCLEOTIDE SEQUENCE [LARGE SCALE GENOMIC DNA]</scope>
    <source>
        <strain>K12 / MG1655 / ATCC 47076</strain>
    </source>
</reference>
<reference key="2">
    <citation type="journal article" date="2006" name="Mol. Syst. Biol.">
        <title>Highly accurate genome sequences of Escherichia coli K-12 strains MG1655 and W3110.</title>
        <authorList>
            <person name="Hayashi K."/>
            <person name="Morooka N."/>
            <person name="Yamamoto Y."/>
            <person name="Fujita K."/>
            <person name="Isono K."/>
            <person name="Choi S."/>
            <person name="Ohtsubo E."/>
            <person name="Baba T."/>
            <person name="Wanner B.L."/>
            <person name="Mori H."/>
            <person name="Horiuchi T."/>
        </authorList>
    </citation>
    <scope>NUCLEOTIDE SEQUENCE [LARGE SCALE GENOMIC DNA]</scope>
    <source>
        <strain>K12 / W3110 / ATCC 27325 / DSM 5911</strain>
    </source>
</reference>
<reference key="3">
    <citation type="journal article" date="1991" name="Mol. Microbiol.">
        <title>The hha gene modulates haemolysin expression in Escherichia coli.</title>
        <authorList>
            <person name="Nieto J.M."/>
            <person name="Carmona M."/>
            <person name="Bolland S."/>
            <person name="Jubete Y."/>
            <person name="de la Cruz F."/>
            <person name="Juarez A."/>
        </authorList>
    </citation>
    <scope>NUCLEOTIDE SEQUENCE [GENOMIC DNA] OF 19-124</scope>
    <source>
        <strain>K12 / C600 / CR34 / ATCC 23724 / DSM 3925 / LMG 3041 / NCIB 10222</strain>
    </source>
</reference>
<reference key="4">
    <citation type="journal article" date="1994" name="Nucleic Acids Res.">
        <title>Intrinsic and extrinsic approaches for detecting genes in a bacterial genome.</title>
        <authorList>
            <person name="Borodovsky M."/>
            <person name="Rudd K.E."/>
            <person name="Koonin E.V."/>
        </authorList>
    </citation>
    <scope>IDENTIFICATION</scope>
</reference>
<reference key="5">
    <citation type="journal article" date="2004" name="Appl. Microbiol. Biotechnol.">
        <title>Gene expression in Escherichia coli biofilms.</title>
        <authorList>
            <person name="Ren D."/>
            <person name="Bedzyk L.A."/>
            <person name="Thomas S.M."/>
            <person name="Ye R.W."/>
            <person name="Wood T.K."/>
        </authorList>
    </citation>
    <scope>INDUCTION</scope>
    <source>
        <strain>K12 / JM109 / ATCC 53323</strain>
    </source>
</reference>
<reference key="6">
    <citation type="journal article" date="2006" name="Biotechnol. Bioeng.">
        <title>Hha, YbaJ, and OmpA regulate Escherichia coli K12 biofilm formation and conjugation plasmids abolish motility.</title>
        <authorList>
            <person name="Barrios A.F."/>
            <person name="Zuo R."/>
            <person name="Ren D."/>
            <person name="Wood T.K."/>
        </authorList>
    </citation>
    <scope>FUNCTION IN BIOFILM FORMATION</scope>
    <scope>DISRUPTION PHENOTYPE</scope>
    <source>
        <strain>K12 / ATCC 25404 / DSM 5698 / NCIMB 11290</strain>
    </source>
</reference>
<reference key="7">
    <citation type="journal article" date="2008" name="PLoS ONE">
        <title>Protein translation and cell death: the role of rare tRNAs in biofilm formation and in activating dormant phage killer genes.</title>
        <authorList>
            <person name="Garcia-Contreras R."/>
            <person name="Zhang X.S."/>
            <person name="Kim Y."/>
            <person name="Wood T.K."/>
        </authorList>
    </citation>
    <scope>FUNCTION</scope>
    <scope>INDUCTION</scope>
    <scope>DNA-BINDING</scope>
    <scope>GENE NAME</scope>
    <source>
        <strain>K12 / BW25113</strain>
    </source>
</reference>
<protein>
    <recommendedName>
        <fullName>Hha toxicity modulator TomB</fullName>
    </recommendedName>
    <alternativeName>
        <fullName>Toxin overexpression modulator in biofilms</fullName>
    </alternativeName>
</protein>
<comment type="function">
    <text evidence="2 3">Attenuates Hha toxicity and regulates biofilm formation. Binds to various coding and intergenic regions of genomic DNA.</text>
</comment>
<comment type="subcellular location">
    <subcellularLocation>
        <location evidence="4">Cytoplasm</location>
    </subcellularLocation>
</comment>
<comment type="induction">
    <text evidence="1 3 4">Expression is autoregulated (Probable). Induced during biofilm formation.</text>
</comment>
<comment type="disruption phenotype">
    <text evidence="2">Deletion of hha and tomB, in the presence of a conjugative plasmid (R1drd19), decreases biofilm formation, cell aggregation and increases motility via flagella and motility gene expression.</text>
</comment>
<comment type="miscellaneous">
    <text evidence="5">Hha and TomB may form a type II toxin-antitoxin (TA) system (PubMed:18545668).</text>
</comment>
<comment type="similarity">
    <text evidence="4">Belongs to the TomB family.</text>
</comment>
<comment type="sequence caution" evidence="4">
    <conflict type="frameshift">
        <sequence resource="EMBL" id="X57977"/>
    </conflict>
</comment>